<evidence type="ECO:0000250" key="1"/>
<evidence type="ECO:0000250" key="2">
    <source>
        <dbReference type="UniProtKB" id="P27124"/>
    </source>
</evidence>
<evidence type="ECO:0000250" key="3">
    <source>
        <dbReference type="UniProtKB" id="P30416"/>
    </source>
</evidence>
<evidence type="ECO:0000250" key="4">
    <source>
        <dbReference type="UniProtKB" id="Q02790"/>
    </source>
</evidence>
<evidence type="ECO:0000250" key="5">
    <source>
        <dbReference type="UniProtKB" id="Q9QVC8"/>
    </source>
</evidence>
<evidence type="ECO:0000255" key="6">
    <source>
        <dbReference type="PROSITE-ProRule" id="PRU00277"/>
    </source>
</evidence>
<evidence type="ECO:0000256" key="7">
    <source>
        <dbReference type="SAM" id="MobiDB-lite"/>
    </source>
</evidence>
<evidence type="ECO:0000305" key="8"/>
<protein>
    <recommendedName>
        <fullName>Peptidyl-prolyl cis-trans isomerase FKBP4</fullName>
        <shortName>PPIase FKBP4</shortName>
        <ecNumber>5.2.1.8</ecNumber>
    </recommendedName>
    <alternativeName>
        <fullName>52 kDa FK506-binding protein</fullName>
        <shortName>52 kDa FKBP</shortName>
        <shortName>FKBP-52</shortName>
    </alternativeName>
    <alternativeName>
        <fullName>FK506-binding protein 4</fullName>
        <shortName>FKBP-4</shortName>
    </alternativeName>
    <alternativeName>
        <fullName>HSP-binding immunophilin</fullName>
        <shortName>HBI</shortName>
    </alternativeName>
    <alternativeName>
        <fullName>Immunophilin FKBP52</fullName>
    </alternativeName>
    <alternativeName>
        <fullName>Rotamase</fullName>
    </alternativeName>
    <component>
        <recommendedName>
            <fullName>Peptidyl-prolyl cis-trans isomerase FKBP4, N-terminally processed</fullName>
        </recommendedName>
    </component>
</protein>
<comment type="function">
    <text evidence="1">Immunophilin protein with PPIase and co-chaperone activities (By similarity). Component of unligated steroid receptors heterocomplexes through interaction with heat-shock protein 90 (HSP90) (By similarity). May play a role in the intracellular trafficking of heterooligomeric forms of steroid hormone receptors between cytoplasm and nuclear compartments (By similarity). The isomerase activity controls neuronal growth cones via regulation of TRPC1 channel opening (By similarity). Also acts as a regulator of microtubule dynamics by inhibiting MAPT/TAU ability to promote microtubule assembly. May have a protective role against oxidative stress in mitochondria (By similarity).</text>
</comment>
<comment type="catalytic activity">
    <reaction>
        <text>[protein]-peptidylproline (omega=180) = [protein]-peptidylproline (omega=0)</text>
        <dbReference type="Rhea" id="RHEA:16237"/>
        <dbReference type="Rhea" id="RHEA-COMP:10747"/>
        <dbReference type="Rhea" id="RHEA-COMP:10748"/>
        <dbReference type="ChEBI" id="CHEBI:83833"/>
        <dbReference type="ChEBI" id="CHEBI:83834"/>
        <dbReference type="EC" id="5.2.1.8"/>
    </reaction>
</comment>
<comment type="activity regulation">
    <text evidence="1">Inhibited by FK506.</text>
</comment>
<comment type="subunit">
    <text evidence="1 4 5">Homodimer (By similarity). Interacts with GLMN. Associates with HSP90AA1 and HSP70 in steroid hormone receptor complexes. Also interacts with peroxisomal phytanoyl-CoA alpha-hydroxylase (PHYH). Interacts with NR3C1 and dynein. Interacts with HSF1 in the HSP90 complex. Associates with tubulin. Interacts with MAPT/TAU. Interacts (via TPR domain) with S100A1, S100A2 and S100A6; the interaction is Ca(2+) dependent. Interaction with S100A1 and S100A2 (but not with S100A6) leads to inhibition of FKBP4-HSP90 interaction. Interacts with dynein; causes partially NR3C1 transport to the nucleus (By similarity).</text>
</comment>
<comment type="interaction">
    <interactant intactId="EBI-6477371">
        <id>Q9TRY0</id>
    </interactant>
    <interactant intactId="EBI-6477285">
        <id>P02639</id>
        <label>S100A1</label>
    </interactant>
    <organismsDiffer>false</organismsDiffer>
    <experiments>2</experiments>
</comment>
<comment type="subcellular location">
    <subcellularLocation>
        <location evidence="1">Cytoplasm</location>
        <location evidence="1">Cytosol</location>
    </subcellularLocation>
    <subcellularLocation>
        <location evidence="1">Mitochondrion</location>
    </subcellularLocation>
    <subcellularLocation>
        <location evidence="1">Nucleus</location>
    </subcellularLocation>
    <subcellularLocation>
        <location evidence="1">Cytoplasm</location>
        <location evidence="1">Cytoskeleton</location>
    </subcellularLocation>
    <text evidence="1">Shuttles from mitochondria to nucleus; colocalizes in mitochondria with the glucocorticoid receptor.</text>
</comment>
<comment type="domain">
    <text evidence="1">The PPIase activity is mainly due to the first PPIase FKBP-type domain (1-138 AA).</text>
</comment>
<comment type="domain">
    <text evidence="1">The C-terminal region (AA 375-458) is required to prevent tubulin polymerization.</text>
</comment>
<comment type="domain">
    <text evidence="1">The chaperone activity resides in the C-terminal region, mainly between amino acids 264 and 400.</text>
</comment>
<comment type="domain">
    <text evidence="1">The TPR repeats mediate mitochondrial localization.</text>
</comment>
<dbReference type="EC" id="5.2.1.8"/>
<dbReference type="EMBL" id="BT030531">
    <property type="protein sequence ID" value="ABQ12971.1"/>
    <property type="molecule type" value="mRNA"/>
</dbReference>
<dbReference type="EMBL" id="BC102456">
    <property type="protein sequence ID" value="AAI02457.1"/>
    <property type="molecule type" value="mRNA"/>
</dbReference>
<dbReference type="PIR" id="A42576">
    <property type="entry name" value="A42576"/>
</dbReference>
<dbReference type="PIR" id="B42576">
    <property type="entry name" value="B42576"/>
</dbReference>
<dbReference type="RefSeq" id="NP_001029494.1">
    <property type="nucleotide sequence ID" value="NM_001034322.2"/>
</dbReference>
<dbReference type="SMR" id="Q9TRY0"/>
<dbReference type="FunCoup" id="Q9TRY0">
    <property type="interactions" value="2315"/>
</dbReference>
<dbReference type="IntAct" id="Q9TRY0">
    <property type="interactions" value="1"/>
</dbReference>
<dbReference type="STRING" id="9913.ENSBTAP00000009998"/>
<dbReference type="PaxDb" id="9913-ENSBTAP00000009998"/>
<dbReference type="PeptideAtlas" id="Q9TRY0"/>
<dbReference type="GeneID" id="508535"/>
<dbReference type="KEGG" id="bta:508535"/>
<dbReference type="CTD" id="2288"/>
<dbReference type="eggNOG" id="KOG0543">
    <property type="taxonomic scope" value="Eukaryota"/>
</dbReference>
<dbReference type="InParanoid" id="Q9TRY0"/>
<dbReference type="OrthoDB" id="433738at2759"/>
<dbReference type="Proteomes" id="UP000009136">
    <property type="component" value="Unplaced"/>
</dbReference>
<dbReference type="GO" id="GO:0044295">
    <property type="term" value="C:axonal growth cone"/>
    <property type="evidence" value="ECO:0000250"/>
    <property type="project" value="UniProtKB"/>
</dbReference>
<dbReference type="GO" id="GO:0005829">
    <property type="term" value="C:cytosol"/>
    <property type="evidence" value="ECO:0000250"/>
    <property type="project" value="UniProtKB"/>
</dbReference>
<dbReference type="GO" id="GO:0005874">
    <property type="term" value="C:microtubule"/>
    <property type="evidence" value="ECO:0007669"/>
    <property type="project" value="UniProtKB-KW"/>
</dbReference>
<dbReference type="GO" id="GO:0005739">
    <property type="term" value="C:mitochondrion"/>
    <property type="evidence" value="ECO:0007669"/>
    <property type="project" value="UniProtKB-SubCell"/>
</dbReference>
<dbReference type="GO" id="GO:0005634">
    <property type="term" value="C:nucleus"/>
    <property type="evidence" value="ECO:0007669"/>
    <property type="project" value="UniProtKB-SubCell"/>
</dbReference>
<dbReference type="GO" id="GO:0003755">
    <property type="term" value="F:peptidyl-prolyl cis-trans isomerase activity"/>
    <property type="evidence" value="ECO:0000250"/>
    <property type="project" value="UniProtKB"/>
</dbReference>
<dbReference type="GO" id="GO:0061077">
    <property type="term" value="P:chaperone-mediated protein folding"/>
    <property type="evidence" value="ECO:0000250"/>
    <property type="project" value="UniProtKB"/>
</dbReference>
<dbReference type="GO" id="GO:0031111">
    <property type="term" value="P:negative regulation of microtubule polymerization or depolymerization"/>
    <property type="evidence" value="ECO:0000250"/>
    <property type="project" value="UniProtKB"/>
</dbReference>
<dbReference type="GO" id="GO:0010977">
    <property type="term" value="P:negative regulation of neuron projection development"/>
    <property type="evidence" value="ECO:0000250"/>
    <property type="project" value="UniProtKB"/>
</dbReference>
<dbReference type="FunFam" id="1.25.40.10:FF:000008">
    <property type="entry name" value="Peptidylprolyl isomerase"/>
    <property type="match status" value="1"/>
</dbReference>
<dbReference type="FunFam" id="3.10.50.40:FF:000011">
    <property type="entry name" value="Peptidylprolyl isomerase"/>
    <property type="match status" value="1"/>
</dbReference>
<dbReference type="FunFam" id="3.10.50.40:FF:000013">
    <property type="entry name" value="Peptidylprolyl isomerase"/>
    <property type="match status" value="1"/>
</dbReference>
<dbReference type="Gene3D" id="3.10.50.40">
    <property type="match status" value="2"/>
</dbReference>
<dbReference type="Gene3D" id="1.25.40.10">
    <property type="entry name" value="Tetratricopeptide repeat domain"/>
    <property type="match status" value="1"/>
</dbReference>
<dbReference type="InterPro" id="IPR050754">
    <property type="entry name" value="FKBP4/5/8-like"/>
</dbReference>
<dbReference type="InterPro" id="IPR046357">
    <property type="entry name" value="PPIase_dom_sf"/>
</dbReference>
<dbReference type="InterPro" id="IPR001179">
    <property type="entry name" value="PPIase_FKBP_dom"/>
</dbReference>
<dbReference type="InterPro" id="IPR011990">
    <property type="entry name" value="TPR-like_helical_dom_sf"/>
</dbReference>
<dbReference type="InterPro" id="IPR013105">
    <property type="entry name" value="TPR_2"/>
</dbReference>
<dbReference type="InterPro" id="IPR019734">
    <property type="entry name" value="TPR_rpt"/>
</dbReference>
<dbReference type="PANTHER" id="PTHR46512">
    <property type="entry name" value="PEPTIDYLPROLYL ISOMERASE"/>
    <property type="match status" value="1"/>
</dbReference>
<dbReference type="PANTHER" id="PTHR46512:SF9">
    <property type="entry name" value="PEPTIDYLPROLYL ISOMERASE"/>
    <property type="match status" value="1"/>
</dbReference>
<dbReference type="Pfam" id="PF00254">
    <property type="entry name" value="FKBP_C"/>
    <property type="match status" value="2"/>
</dbReference>
<dbReference type="Pfam" id="PF00515">
    <property type="entry name" value="TPR_1"/>
    <property type="match status" value="1"/>
</dbReference>
<dbReference type="Pfam" id="PF07719">
    <property type="entry name" value="TPR_2"/>
    <property type="match status" value="1"/>
</dbReference>
<dbReference type="SMART" id="SM00028">
    <property type="entry name" value="TPR"/>
    <property type="match status" value="3"/>
</dbReference>
<dbReference type="SUPFAM" id="SSF54534">
    <property type="entry name" value="FKBP-like"/>
    <property type="match status" value="2"/>
</dbReference>
<dbReference type="SUPFAM" id="SSF48452">
    <property type="entry name" value="TPR-like"/>
    <property type="match status" value="1"/>
</dbReference>
<dbReference type="PROSITE" id="PS50059">
    <property type="entry name" value="FKBP_PPIASE"/>
    <property type="match status" value="2"/>
</dbReference>
<dbReference type="PROSITE" id="PS50005">
    <property type="entry name" value="TPR"/>
    <property type="match status" value="3"/>
</dbReference>
<dbReference type="PROSITE" id="PS50293">
    <property type="entry name" value="TPR_REGION"/>
    <property type="match status" value="2"/>
</dbReference>
<gene>
    <name type="primary">FKBP4</name>
</gene>
<keyword id="KW-0007">Acetylation</keyword>
<keyword id="KW-0143">Chaperone</keyword>
<keyword id="KW-0963">Cytoplasm</keyword>
<keyword id="KW-0206">Cytoskeleton</keyword>
<keyword id="KW-0903">Direct protein sequencing</keyword>
<keyword id="KW-0413">Isomerase</keyword>
<keyword id="KW-0488">Methylation</keyword>
<keyword id="KW-0493">Microtubule</keyword>
<keyword id="KW-0496">Mitochondrion</keyword>
<keyword id="KW-0539">Nucleus</keyword>
<keyword id="KW-0597">Phosphoprotein</keyword>
<keyword id="KW-1185">Reference proteome</keyword>
<keyword id="KW-0677">Repeat</keyword>
<keyword id="KW-0697">Rotamase</keyword>
<keyword id="KW-0802">TPR repeat</keyword>
<accession>Q9TRY0</accession>
<accession>A5D9B2</accession>
<accession>Q3T0C4</accession>
<accession>Q9TRX9</accession>
<reference key="1">
    <citation type="journal article" date="2005" name="BMC Genomics">
        <title>Characterization of 954 bovine full-CDS cDNA sequences.</title>
        <authorList>
            <person name="Harhay G.P."/>
            <person name="Sonstegard T.S."/>
            <person name="Keele J.W."/>
            <person name="Heaton M.P."/>
            <person name="Clawson M.L."/>
            <person name="Snelling W.M."/>
            <person name="Wiedmann R.T."/>
            <person name="Van Tassell C.P."/>
            <person name="Smith T.P.L."/>
        </authorList>
    </citation>
    <scope>NUCLEOTIDE SEQUENCE [LARGE SCALE MRNA]</scope>
</reference>
<reference key="2">
    <citation type="submission" date="2005-08" db="EMBL/GenBank/DDBJ databases">
        <authorList>
            <consortium name="NIH - Mammalian Gene Collection (MGC) project"/>
        </authorList>
    </citation>
    <scope>NUCLEOTIDE SEQUENCE [LARGE SCALE MRNA]</scope>
    <source>
        <strain>Crossbred X Angus</strain>
        <tissue>Ileum</tissue>
    </source>
</reference>
<reference key="3">
    <citation type="journal article" date="1992" name="Proc. Natl. Acad. Sci. U.S.A.">
        <title>Expression and characterization of human FKBP52, an immunophilin that associates with the 90-kDa heat shock protein and is a component of steroid receptor complexes.</title>
        <authorList>
            <person name="Peattie D.A."/>
            <person name="Harding M.W."/>
            <person name="Fleming M.A."/>
            <person name="Decenzo M.T."/>
            <person name="Lippke J.A."/>
            <person name="Livingston D.J."/>
            <person name="Benasutti M."/>
        </authorList>
    </citation>
    <scope>PROTEIN SEQUENCE OF 2-28; 75-83; 89-98; 122-137; 164-175; 214-222; 245-250; 277-282; 345-354; 410-424 AND 427-440</scope>
    <source>
        <tissue>Thymus</tissue>
    </source>
</reference>
<reference key="4">
    <citation type="journal article" date="1992" name="J. Biol. Chem.">
        <title>The Hsp56 component of steroid receptor complexes binds to immobilized FK506 and shows homology to FKBP-12 and FKBP-13.</title>
        <authorList>
            <person name="Yem A.W."/>
            <person name="Tomasselli A.G."/>
            <person name="Heinrikson R.L."/>
            <person name="Zurcher-Neely H."/>
            <person name="Ruff V.A."/>
            <person name="Johnson R.A."/>
            <person name="Deibel M.R. Jr."/>
        </authorList>
    </citation>
    <scope>PROTEIN SEQUENCE OF 2-18 AND 121-137</scope>
    <source>
        <tissue>Thymus</tissue>
    </source>
</reference>
<feature type="chain" id="PRO_0000391467" description="Peptidyl-prolyl cis-trans isomerase FKBP4">
    <location>
        <begin position="1"/>
        <end position="459"/>
    </location>
</feature>
<feature type="initiator methionine" description="Removed; alternate" evidence="4">
    <location>
        <position position="1"/>
    </location>
</feature>
<feature type="chain" id="PRO_0000075317" description="Peptidyl-prolyl cis-trans isomerase FKBP4, N-terminally processed">
    <location>
        <begin position="2"/>
        <end position="459"/>
    </location>
</feature>
<feature type="domain" description="PPIase FKBP-type 1" evidence="6">
    <location>
        <begin position="50"/>
        <end position="138"/>
    </location>
</feature>
<feature type="domain" description="PPIase FKBP-type 2" evidence="6">
    <location>
        <begin position="167"/>
        <end position="253"/>
    </location>
</feature>
<feature type="repeat" description="TPR 1">
    <location>
        <begin position="270"/>
        <end position="303"/>
    </location>
</feature>
<feature type="repeat" description="TPR 2">
    <location>
        <begin position="319"/>
        <end position="352"/>
    </location>
</feature>
<feature type="repeat" description="TPR 3">
    <location>
        <begin position="354"/>
        <end position="386"/>
    </location>
</feature>
<feature type="region of interest" description="Disordered" evidence="7">
    <location>
        <begin position="1"/>
        <end position="22"/>
    </location>
</feature>
<feature type="region of interest" description="Interaction with tubulin" evidence="1">
    <location>
        <begin position="267"/>
        <end position="400"/>
    </location>
</feature>
<feature type="region of interest" description="Disordered" evidence="7">
    <location>
        <begin position="423"/>
        <end position="459"/>
    </location>
</feature>
<feature type="modified residue" description="N-acetylmethionine; in peptidyl-prolyl cis-trans isomerase FKBP4; alternate" evidence="4">
    <location>
        <position position="1"/>
    </location>
</feature>
<feature type="modified residue" description="N-acetylthreonine; in peptidyl-prolyl cis-trans isomerase FKBP4, N-terminally processed; partial" evidence="4">
    <location>
        <position position="2"/>
    </location>
</feature>
<feature type="modified residue" description="Phosphothreonine" evidence="2">
    <location>
        <position position="143"/>
    </location>
</feature>
<feature type="modified residue" description="Phosphotyrosine" evidence="4">
    <location>
        <position position="220"/>
    </location>
</feature>
<feature type="modified residue" description="N6-acetyllysine" evidence="4">
    <location>
        <position position="282"/>
    </location>
</feature>
<feature type="modified residue" description="Omega-N-methylarginine" evidence="3">
    <location>
        <position position="373"/>
    </location>
</feature>
<feature type="sequence conflict" description="In Ref. 3; AA sequence." evidence="8" ref="3">
    <original>T</original>
    <variation>L</variation>
    <location>
        <position position="428"/>
    </location>
</feature>
<proteinExistence type="evidence at protein level"/>
<sequence>MTAEETKAAESGAQSAPLRLEGVDISPKQDEGVLKVIKREGTGTETPMIGDRVFVHYTGWLLDGTKFDSSLDRKDRFSFDLGKGEVIKAWDIAVATMKVGEVCHITCKPEYAYGLAGSPPKIPPNATLVFEVELFEFKGEDLTEEEDGGIIRRIRTRGEGYAKPNEGALVEVALEGYFKDQVFDRRELRFEVGEGESMDLPCGLEKAIQRMEKGEHSIVYLKPRYAFGSAGKEKFQIPPNAELKYEIHLKSFEKAKESWEMSSEEKLEQSTIVKERGTVYFKEGKYKQAVLQYKKIVSWLEYESSFSDEDAEKAQALRLASHLNLAMCHLKLQAFSAAIENCNKALELDSNNEKGLFRRGEAHLAVNDFDLARADFQKVLQLYPSNKAAKAQLVVCQQRIRKQLEKEKKLYANMFERLAEEETKAKATVAAGDQPADAEMRDEPKNDVAGGQPQVEAEA</sequence>
<organism>
    <name type="scientific">Bos taurus</name>
    <name type="common">Bovine</name>
    <dbReference type="NCBI Taxonomy" id="9913"/>
    <lineage>
        <taxon>Eukaryota</taxon>
        <taxon>Metazoa</taxon>
        <taxon>Chordata</taxon>
        <taxon>Craniata</taxon>
        <taxon>Vertebrata</taxon>
        <taxon>Euteleostomi</taxon>
        <taxon>Mammalia</taxon>
        <taxon>Eutheria</taxon>
        <taxon>Laurasiatheria</taxon>
        <taxon>Artiodactyla</taxon>
        <taxon>Ruminantia</taxon>
        <taxon>Pecora</taxon>
        <taxon>Bovidae</taxon>
        <taxon>Bovinae</taxon>
        <taxon>Bos</taxon>
    </lineage>
</organism>
<name>FKBP4_BOVIN</name>